<evidence type="ECO:0000255" key="1">
    <source>
        <dbReference type="HAMAP-Rule" id="MF_00373"/>
    </source>
</evidence>
<evidence type="ECO:0000256" key="2">
    <source>
        <dbReference type="SAM" id="MobiDB-lite"/>
    </source>
</evidence>
<evidence type="ECO:0000305" key="3"/>
<comment type="similarity">
    <text evidence="1">Belongs to the bacterial ribosomal protein bL28 family.</text>
</comment>
<reference key="1">
    <citation type="journal article" date="2005" name="Proc. Natl. Acad. Sci. U.S.A.">
        <title>Complete genome sequence of Vibrio fischeri: a symbiotic bacterium with pathogenic congeners.</title>
        <authorList>
            <person name="Ruby E.G."/>
            <person name="Urbanowski M."/>
            <person name="Campbell J."/>
            <person name="Dunn A."/>
            <person name="Faini M."/>
            <person name="Gunsalus R."/>
            <person name="Lostroh P."/>
            <person name="Lupp C."/>
            <person name="McCann J."/>
            <person name="Millikan D."/>
            <person name="Schaefer A."/>
            <person name="Stabb E."/>
            <person name="Stevens A."/>
            <person name="Visick K."/>
            <person name="Whistler C."/>
            <person name="Greenberg E.P."/>
        </authorList>
    </citation>
    <scope>NUCLEOTIDE SEQUENCE [LARGE SCALE GENOMIC DNA]</scope>
    <source>
        <strain>ATCC 700601 / ES114</strain>
    </source>
</reference>
<name>RL28_ALIF1</name>
<sequence>MSRVCQVTGKRPAVGNNRSHAKNATKRRFLPNLQTHRFWVESEKRFVKLRLTAKGMRIIDKKGIETVLADMRARGENV</sequence>
<organism>
    <name type="scientific">Aliivibrio fischeri (strain ATCC 700601 / ES114)</name>
    <name type="common">Vibrio fischeri</name>
    <dbReference type="NCBI Taxonomy" id="312309"/>
    <lineage>
        <taxon>Bacteria</taxon>
        <taxon>Pseudomonadati</taxon>
        <taxon>Pseudomonadota</taxon>
        <taxon>Gammaproteobacteria</taxon>
        <taxon>Vibrionales</taxon>
        <taxon>Vibrionaceae</taxon>
        <taxon>Aliivibrio</taxon>
    </lineage>
</organism>
<gene>
    <name evidence="1" type="primary">rpmB</name>
    <name type="ordered locus">VF_0127</name>
</gene>
<feature type="chain" id="PRO_0000178585" description="Large ribosomal subunit protein bL28">
    <location>
        <begin position="1"/>
        <end position="78"/>
    </location>
</feature>
<feature type="region of interest" description="Disordered" evidence="2">
    <location>
        <begin position="1"/>
        <end position="25"/>
    </location>
</feature>
<dbReference type="EMBL" id="CP000020">
    <property type="protein sequence ID" value="AAW84622.1"/>
    <property type="molecule type" value="Genomic_DNA"/>
</dbReference>
<dbReference type="RefSeq" id="WP_005417050.1">
    <property type="nucleotide sequence ID" value="NZ_CAWLES010000001.1"/>
</dbReference>
<dbReference type="RefSeq" id="YP_203510.1">
    <property type="nucleotide sequence ID" value="NC_006840.2"/>
</dbReference>
<dbReference type="SMR" id="Q5E8M4"/>
<dbReference type="STRING" id="312309.VF_0127"/>
<dbReference type="EnsemblBacteria" id="AAW84622">
    <property type="protein sequence ID" value="AAW84622"/>
    <property type="gene ID" value="VF_0127"/>
</dbReference>
<dbReference type="GeneID" id="54162753"/>
<dbReference type="KEGG" id="vfi:VF_0127"/>
<dbReference type="PATRIC" id="fig|312309.11.peg.126"/>
<dbReference type="eggNOG" id="COG0227">
    <property type="taxonomic scope" value="Bacteria"/>
</dbReference>
<dbReference type="HOGENOM" id="CLU_064548_3_1_6"/>
<dbReference type="OrthoDB" id="9805609at2"/>
<dbReference type="Proteomes" id="UP000000537">
    <property type="component" value="Chromosome I"/>
</dbReference>
<dbReference type="GO" id="GO:0022625">
    <property type="term" value="C:cytosolic large ribosomal subunit"/>
    <property type="evidence" value="ECO:0007669"/>
    <property type="project" value="TreeGrafter"/>
</dbReference>
<dbReference type="GO" id="GO:0003735">
    <property type="term" value="F:structural constituent of ribosome"/>
    <property type="evidence" value="ECO:0007669"/>
    <property type="project" value="InterPro"/>
</dbReference>
<dbReference type="GO" id="GO:0006412">
    <property type="term" value="P:translation"/>
    <property type="evidence" value="ECO:0007669"/>
    <property type="project" value="UniProtKB-UniRule"/>
</dbReference>
<dbReference type="FunFam" id="2.30.170.40:FF:000001">
    <property type="entry name" value="50S ribosomal protein L28"/>
    <property type="match status" value="1"/>
</dbReference>
<dbReference type="Gene3D" id="2.30.170.40">
    <property type="entry name" value="Ribosomal protein L28/L24"/>
    <property type="match status" value="1"/>
</dbReference>
<dbReference type="HAMAP" id="MF_00373">
    <property type="entry name" value="Ribosomal_bL28"/>
    <property type="match status" value="1"/>
</dbReference>
<dbReference type="InterPro" id="IPR026569">
    <property type="entry name" value="Ribosomal_bL28"/>
</dbReference>
<dbReference type="InterPro" id="IPR034704">
    <property type="entry name" value="Ribosomal_bL28/bL31-like_sf"/>
</dbReference>
<dbReference type="InterPro" id="IPR001383">
    <property type="entry name" value="Ribosomal_bL28_bact-type"/>
</dbReference>
<dbReference type="InterPro" id="IPR037147">
    <property type="entry name" value="Ribosomal_bL28_sf"/>
</dbReference>
<dbReference type="NCBIfam" id="TIGR00009">
    <property type="entry name" value="L28"/>
    <property type="match status" value="1"/>
</dbReference>
<dbReference type="PANTHER" id="PTHR13528">
    <property type="entry name" value="39S RIBOSOMAL PROTEIN L28, MITOCHONDRIAL"/>
    <property type="match status" value="1"/>
</dbReference>
<dbReference type="PANTHER" id="PTHR13528:SF2">
    <property type="entry name" value="LARGE RIBOSOMAL SUBUNIT PROTEIN BL28M"/>
    <property type="match status" value="1"/>
</dbReference>
<dbReference type="Pfam" id="PF00830">
    <property type="entry name" value="Ribosomal_L28"/>
    <property type="match status" value="1"/>
</dbReference>
<dbReference type="SUPFAM" id="SSF143800">
    <property type="entry name" value="L28p-like"/>
    <property type="match status" value="1"/>
</dbReference>
<accession>Q5E8M4</accession>
<proteinExistence type="inferred from homology"/>
<keyword id="KW-1185">Reference proteome</keyword>
<keyword id="KW-0687">Ribonucleoprotein</keyword>
<keyword id="KW-0689">Ribosomal protein</keyword>
<protein>
    <recommendedName>
        <fullName evidence="1">Large ribosomal subunit protein bL28</fullName>
    </recommendedName>
    <alternativeName>
        <fullName evidence="3">50S ribosomal protein L28</fullName>
    </alternativeName>
</protein>